<comment type="function">
    <text evidence="1">This protein is located at the 30S-50S ribosomal subunit interface and may play a role in the structure and function of the aminoacyl-tRNA binding site.</text>
</comment>
<comment type="similarity">
    <text evidence="1">Belongs to the bacterial ribosomal protein bL19 family.</text>
</comment>
<reference key="1">
    <citation type="journal article" date="2008" name="J. Bacteriol.">
        <title>Insights into the environmental resistance gene pool from the genome sequence of the multidrug-resistant environmental isolate Escherichia coli SMS-3-5.</title>
        <authorList>
            <person name="Fricke W.F."/>
            <person name="Wright M.S."/>
            <person name="Lindell A.H."/>
            <person name="Harkins D.M."/>
            <person name="Baker-Austin C."/>
            <person name="Ravel J."/>
            <person name="Stepanauskas R."/>
        </authorList>
    </citation>
    <scope>NUCLEOTIDE SEQUENCE [LARGE SCALE GENOMIC DNA]</scope>
    <source>
        <strain>SMS-3-5 / SECEC</strain>
    </source>
</reference>
<feature type="chain" id="PRO_1000193832" description="Large ribosomal subunit protein bL19">
    <location>
        <begin position="1"/>
        <end position="115"/>
    </location>
</feature>
<evidence type="ECO:0000255" key="1">
    <source>
        <dbReference type="HAMAP-Rule" id="MF_00402"/>
    </source>
</evidence>
<evidence type="ECO:0000305" key="2"/>
<keyword id="KW-0687">Ribonucleoprotein</keyword>
<keyword id="KW-0689">Ribosomal protein</keyword>
<proteinExistence type="inferred from homology"/>
<accession>B1LPB3</accession>
<sequence length="115" mass="13133">MSNIIKQLEQEQMKQDVPSFRPGDTVEVKVWVVEGSKKRLQAFEGVVIAIRNRGLHSAFTVRKISNGEGVERVFQTHSPVVDSISVKRRGAVRKAKLYYLRERTGKAARIKERLN</sequence>
<organism>
    <name type="scientific">Escherichia coli (strain SMS-3-5 / SECEC)</name>
    <dbReference type="NCBI Taxonomy" id="439855"/>
    <lineage>
        <taxon>Bacteria</taxon>
        <taxon>Pseudomonadati</taxon>
        <taxon>Pseudomonadota</taxon>
        <taxon>Gammaproteobacteria</taxon>
        <taxon>Enterobacterales</taxon>
        <taxon>Enterobacteriaceae</taxon>
        <taxon>Escherichia</taxon>
    </lineage>
</organism>
<protein>
    <recommendedName>
        <fullName evidence="1">Large ribosomal subunit protein bL19</fullName>
    </recommendedName>
    <alternativeName>
        <fullName evidence="2">50S ribosomal protein L19</fullName>
    </alternativeName>
</protein>
<name>RL19_ECOSM</name>
<gene>
    <name evidence="1" type="primary">rplS</name>
    <name type="ordered locus">EcSMS35_2758</name>
</gene>
<dbReference type="EMBL" id="CP000970">
    <property type="protein sequence ID" value="ACB18195.1"/>
    <property type="molecule type" value="Genomic_DNA"/>
</dbReference>
<dbReference type="RefSeq" id="WP_000065253.1">
    <property type="nucleotide sequence ID" value="NC_010498.1"/>
</dbReference>
<dbReference type="SMR" id="B1LPB3"/>
<dbReference type="GeneID" id="93774456"/>
<dbReference type="KEGG" id="ecm:EcSMS35_2758"/>
<dbReference type="HOGENOM" id="CLU_103507_2_1_6"/>
<dbReference type="Proteomes" id="UP000007011">
    <property type="component" value="Chromosome"/>
</dbReference>
<dbReference type="GO" id="GO:0022625">
    <property type="term" value="C:cytosolic large ribosomal subunit"/>
    <property type="evidence" value="ECO:0007669"/>
    <property type="project" value="TreeGrafter"/>
</dbReference>
<dbReference type="GO" id="GO:0003735">
    <property type="term" value="F:structural constituent of ribosome"/>
    <property type="evidence" value="ECO:0007669"/>
    <property type="project" value="InterPro"/>
</dbReference>
<dbReference type="GO" id="GO:0006412">
    <property type="term" value="P:translation"/>
    <property type="evidence" value="ECO:0007669"/>
    <property type="project" value="UniProtKB-UniRule"/>
</dbReference>
<dbReference type="FunFam" id="2.30.30.790:FF:000001">
    <property type="entry name" value="50S ribosomal protein L19"/>
    <property type="match status" value="1"/>
</dbReference>
<dbReference type="Gene3D" id="2.30.30.790">
    <property type="match status" value="1"/>
</dbReference>
<dbReference type="HAMAP" id="MF_00402">
    <property type="entry name" value="Ribosomal_bL19"/>
    <property type="match status" value="1"/>
</dbReference>
<dbReference type="InterPro" id="IPR001857">
    <property type="entry name" value="Ribosomal_bL19"/>
</dbReference>
<dbReference type="InterPro" id="IPR018257">
    <property type="entry name" value="Ribosomal_bL19_CS"/>
</dbReference>
<dbReference type="InterPro" id="IPR038657">
    <property type="entry name" value="Ribosomal_bL19_sf"/>
</dbReference>
<dbReference type="InterPro" id="IPR008991">
    <property type="entry name" value="Translation_prot_SH3-like_sf"/>
</dbReference>
<dbReference type="NCBIfam" id="TIGR01024">
    <property type="entry name" value="rplS_bact"/>
    <property type="match status" value="1"/>
</dbReference>
<dbReference type="PANTHER" id="PTHR15680:SF9">
    <property type="entry name" value="LARGE RIBOSOMAL SUBUNIT PROTEIN BL19M"/>
    <property type="match status" value="1"/>
</dbReference>
<dbReference type="PANTHER" id="PTHR15680">
    <property type="entry name" value="RIBOSOMAL PROTEIN L19"/>
    <property type="match status" value="1"/>
</dbReference>
<dbReference type="Pfam" id="PF01245">
    <property type="entry name" value="Ribosomal_L19"/>
    <property type="match status" value="1"/>
</dbReference>
<dbReference type="PIRSF" id="PIRSF002191">
    <property type="entry name" value="Ribosomal_L19"/>
    <property type="match status" value="1"/>
</dbReference>
<dbReference type="PRINTS" id="PR00061">
    <property type="entry name" value="RIBOSOMALL19"/>
</dbReference>
<dbReference type="SUPFAM" id="SSF50104">
    <property type="entry name" value="Translation proteins SH3-like domain"/>
    <property type="match status" value="1"/>
</dbReference>
<dbReference type="PROSITE" id="PS01015">
    <property type="entry name" value="RIBOSOMAL_L19"/>
    <property type="match status" value="1"/>
</dbReference>